<sequence length="503" mass="54459">MKNIGWMLRQRATVSPRLQAYVEPSTDVRMTYAQMNALANRCADVLTALGIAKGDRVALLMPNSVEFCCLFYGAAKLGAVAVPINTRLAAPEVSFILSDSGSKVVIYGAPSAPVIDAIRAQADPPGTVTDWIGADSLAERLRSAAADEPAVECGGDDNLFIMYTSGTTGHPKGVVHTHESVHSAASSWASTIDVRYRDRLLLPLPMFHVAALTTVIFSAMRGVTLISMPQFDATKVWSLIVEERVCIGGAVPAILNFMRQVPEFAELDAPDFRYFITGGAPMPEALIKIYAAKNIEVVQGYALTESCGGGTLLLSEDALRKAGSAGRATMFTDVAVRGDDGVIREHGEGEVVIKSDILLKEYWNRPEATRDAFDNGWFRTGDIGEIDDEGYLYIKDRLKDMIISGGENVYPAEIESVIIGVPGVSEVAVIGLPDEKWGEIAAAIVVADQNEVSEQQIVEYCGTRLARYKLPKKVIFAEAIPRNPTGKILKTVLREQYSATVPK</sequence>
<dbReference type="EC" id="6.2.1.3" evidence="4 5"/>
<dbReference type="EMBL" id="AL123456">
    <property type="protein sequence ID" value="CCP45898.1"/>
    <property type="molecule type" value="Genomic_DNA"/>
</dbReference>
<dbReference type="PIR" id="E70853">
    <property type="entry name" value="E70853"/>
</dbReference>
<dbReference type="RefSeq" id="NP_217605.1">
    <property type="nucleotide sequence ID" value="NC_000962.3"/>
</dbReference>
<dbReference type="RefSeq" id="WP_003416081.1">
    <property type="nucleotide sequence ID" value="NZ_NVQJ01000011.1"/>
</dbReference>
<dbReference type="PDB" id="3R44">
    <property type="method" value="X-ray"/>
    <property type="resolution" value="1.80 A"/>
    <property type="chains" value="A=1-503"/>
</dbReference>
<dbReference type="PDB" id="3T5B">
    <property type="method" value="X-ray"/>
    <property type="resolution" value="2.35 A"/>
    <property type="chains" value="A=1-396"/>
</dbReference>
<dbReference type="PDB" id="3T5C">
    <property type="method" value="X-ray"/>
    <property type="resolution" value="2.09 A"/>
    <property type="chains" value="A/B=1-396"/>
</dbReference>
<dbReference type="PDB" id="5ZRN">
    <property type="method" value="X-ray"/>
    <property type="resolution" value="2.37 A"/>
    <property type="chains" value="A/B=1-398"/>
</dbReference>
<dbReference type="PDBsum" id="3R44"/>
<dbReference type="PDBsum" id="3T5B"/>
<dbReference type="PDBsum" id="3T5C"/>
<dbReference type="PDBsum" id="5ZRN"/>
<dbReference type="SMR" id="P9WQ37"/>
<dbReference type="FunCoup" id="P9WQ37">
    <property type="interactions" value="69"/>
</dbReference>
<dbReference type="STRING" id="83332.Rv3089"/>
<dbReference type="SwissLipids" id="SLP:000000980"/>
<dbReference type="PaxDb" id="83332-Rv3089"/>
<dbReference type="GeneID" id="888666"/>
<dbReference type="KEGG" id="mtu:Rv3089"/>
<dbReference type="KEGG" id="mtv:RVBD_3089"/>
<dbReference type="TubercuList" id="Rv3089"/>
<dbReference type="eggNOG" id="COG0318">
    <property type="taxonomic scope" value="Bacteria"/>
</dbReference>
<dbReference type="InParanoid" id="P9WQ37"/>
<dbReference type="OrthoDB" id="9803968at2"/>
<dbReference type="PhylomeDB" id="P9WQ37"/>
<dbReference type="UniPathway" id="UPA00094"/>
<dbReference type="EvolutionaryTrace" id="P9WQ37"/>
<dbReference type="Proteomes" id="UP000001584">
    <property type="component" value="Chromosome"/>
</dbReference>
<dbReference type="GO" id="GO:0005829">
    <property type="term" value="C:cytosol"/>
    <property type="evidence" value="ECO:0007005"/>
    <property type="project" value="MTBBASE"/>
</dbReference>
<dbReference type="GO" id="GO:0009274">
    <property type="term" value="C:peptidoglycan-based cell wall"/>
    <property type="evidence" value="ECO:0007005"/>
    <property type="project" value="MTBBASE"/>
</dbReference>
<dbReference type="GO" id="GO:0005886">
    <property type="term" value="C:plasma membrane"/>
    <property type="evidence" value="ECO:0007669"/>
    <property type="project" value="UniProtKB-SubCell"/>
</dbReference>
<dbReference type="GO" id="GO:0005524">
    <property type="term" value="F:ATP binding"/>
    <property type="evidence" value="ECO:0007669"/>
    <property type="project" value="UniProtKB-KW"/>
</dbReference>
<dbReference type="GO" id="GO:0016405">
    <property type="term" value="F:CoA-ligase activity"/>
    <property type="evidence" value="ECO:0000318"/>
    <property type="project" value="GO_Central"/>
</dbReference>
<dbReference type="GO" id="GO:0004321">
    <property type="term" value="F:fatty-acyl-CoA synthase activity"/>
    <property type="evidence" value="ECO:0000314"/>
    <property type="project" value="MTBBASE"/>
</dbReference>
<dbReference type="GO" id="GO:0004467">
    <property type="term" value="F:long-chain fatty acid-CoA ligase activity"/>
    <property type="evidence" value="ECO:0007669"/>
    <property type="project" value="UniProtKB-EC"/>
</dbReference>
<dbReference type="GO" id="GO:0051701">
    <property type="term" value="P:biological process involved in interaction with host"/>
    <property type="evidence" value="ECO:0000315"/>
    <property type="project" value="MTBBASE"/>
</dbReference>
<dbReference type="GO" id="GO:0006633">
    <property type="term" value="P:fatty acid biosynthetic process"/>
    <property type="evidence" value="ECO:0007669"/>
    <property type="project" value="UniProtKB-UniPathway"/>
</dbReference>
<dbReference type="GO" id="GO:0010447">
    <property type="term" value="P:response to acidic pH"/>
    <property type="evidence" value="ECO:0000270"/>
    <property type="project" value="MTBBASE"/>
</dbReference>
<dbReference type="CDD" id="cd17631">
    <property type="entry name" value="FACL_FadD13-like"/>
    <property type="match status" value="1"/>
</dbReference>
<dbReference type="FunFam" id="3.30.300.30:FF:000008">
    <property type="entry name" value="2,3-dihydroxybenzoate-AMP ligase"/>
    <property type="match status" value="1"/>
</dbReference>
<dbReference type="Gene3D" id="3.30.300.30">
    <property type="match status" value="1"/>
</dbReference>
<dbReference type="Gene3D" id="3.40.50.12780">
    <property type="entry name" value="N-terminal domain of ligase-like"/>
    <property type="match status" value="1"/>
</dbReference>
<dbReference type="InterPro" id="IPR025110">
    <property type="entry name" value="AMP-bd_C"/>
</dbReference>
<dbReference type="InterPro" id="IPR045851">
    <property type="entry name" value="AMP-bd_C_sf"/>
</dbReference>
<dbReference type="InterPro" id="IPR020845">
    <property type="entry name" value="AMP-binding_CS"/>
</dbReference>
<dbReference type="InterPro" id="IPR000873">
    <property type="entry name" value="AMP-dep_synth/lig_dom"/>
</dbReference>
<dbReference type="InterPro" id="IPR042099">
    <property type="entry name" value="ANL_N_sf"/>
</dbReference>
<dbReference type="NCBIfam" id="NF004837">
    <property type="entry name" value="PRK06187.1"/>
    <property type="match status" value="1"/>
</dbReference>
<dbReference type="PANTHER" id="PTHR43201">
    <property type="entry name" value="ACYL-COA SYNTHETASE"/>
    <property type="match status" value="1"/>
</dbReference>
<dbReference type="PANTHER" id="PTHR43201:SF5">
    <property type="entry name" value="MEDIUM-CHAIN ACYL-COA LIGASE ACSF2, MITOCHONDRIAL"/>
    <property type="match status" value="1"/>
</dbReference>
<dbReference type="Pfam" id="PF00501">
    <property type="entry name" value="AMP-binding"/>
    <property type="match status" value="1"/>
</dbReference>
<dbReference type="Pfam" id="PF13193">
    <property type="entry name" value="AMP-binding_C"/>
    <property type="match status" value="1"/>
</dbReference>
<dbReference type="SUPFAM" id="SSF56801">
    <property type="entry name" value="Acetyl-CoA synthetase-like"/>
    <property type="match status" value="1"/>
</dbReference>
<dbReference type="PROSITE" id="PS00455">
    <property type="entry name" value="AMP_BINDING"/>
    <property type="match status" value="1"/>
</dbReference>
<gene>
    <name type="primary">fadD13</name>
    <name type="ordered locus">Rv3089</name>
</gene>
<reference key="1">
    <citation type="journal article" date="1998" name="Nature">
        <title>Deciphering the biology of Mycobacterium tuberculosis from the complete genome sequence.</title>
        <authorList>
            <person name="Cole S.T."/>
            <person name="Brosch R."/>
            <person name="Parkhill J."/>
            <person name="Garnier T."/>
            <person name="Churcher C.M."/>
            <person name="Harris D.E."/>
            <person name="Gordon S.V."/>
            <person name="Eiglmeier K."/>
            <person name="Gas S."/>
            <person name="Barry C.E. III"/>
            <person name="Tekaia F."/>
            <person name="Badcock K."/>
            <person name="Basham D."/>
            <person name="Brown D."/>
            <person name="Chillingworth T."/>
            <person name="Connor R."/>
            <person name="Davies R.M."/>
            <person name="Devlin K."/>
            <person name="Feltwell T."/>
            <person name="Gentles S."/>
            <person name="Hamlin N."/>
            <person name="Holroyd S."/>
            <person name="Hornsby T."/>
            <person name="Jagels K."/>
            <person name="Krogh A."/>
            <person name="McLean J."/>
            <person name="Moule S."/>
            <person name="Murphy L.D."/>
            <person name="Oliver S."/>
            <person name="Osborne J."/>
            <person name="Quail M.A."/>
            <person name="Rajandream M.A."/>
            <person name="Rogers J."/>
            <person name="Rutter S."/>
            <person name="Seeger K."/>
            <person name="Skelton S."/>
            <person name="Squares S."/>
            <person name="Squares R."/>
            <person name="Sulston J.E."/>
            <person name="Taylor K."/>
            <person name="Whitehead S."/>
            <person name="Barrell B.G."/>
        </authorList>
    </citation>
    <scope>NUCLEOTIDE SEQUENCE [LARGE SCALE GENOMIC DNA]</scope>
    <source>
        <strain>ATCC 25618 / H37Rv</strain>
    </source>
</reference>
<reference key="2">
    <citation type="journal article" date="2003" name="FEMS Microbiol. Lett.">
        <title>mymA operon of Mycobacterium tuberculosis: its regulation and importance in the cell envelope.</title>
        <authorList>
            <person name="Singh A."/>
            <person name="Jain S."/>
            <person name="Gupta S."/>
            <person name="Das T."/>
            <person name="Tyagi A.K."/>
        </authorList>
    </citation>
    <scope>INDUCTION</scope>
</reference>
<reference key="3">
    <citation type="journal article" date="2005" name="J. Bacteriol.">
        <title>Requirement of the mymA operon for appropriate cell wall ultrastructure and persistence of Mycobacterium tuberculosis in the spleens of guinea pigs.</title>
        <authorList>
            <person name="Singh A."/>
            <person name="Gupta R."/>
            <person name="Vishwakarma R.A."/>
            <person name="Narayanan P.R."/>
            <person name="Paramasivan C.N."/>
            <person name="Ramanathan V.D."/>
            <person name="Tyagi A.K."/>
        </authorList>
    </citation>
    <scope>FUNCTION</scope>
    <scope>DISRUPTION PHENOTYPE</scope>
    <source>
        <strain>Erdman</strain>
    </source>
</reference>
<reference key="4">
    <citation type="journal article" date="2007" name="Tuberculosis">
        <title>The acid-induced operon Rv3083-Rv3089 is required for growth of Mycobacterium tuberculosis in macrophages.</title>
        <authorList>
            <person name="Cheruvu M."/>
            <person name="Plikaytis B.B."/>
            <person name="Shinnick T.M."/>
        </authorList>
    </citation>
    <scope>DISRUPTION PHENOTYPE</scope>
    <source>
        <strain>ATCC 25618 / H37Rv</strain>
    </source>
</reference>
<reference key="5">
    <citation type="journal article" date="2009" name="Nat. Chem. Biol.">
        <title>Mechanistic and functional insights into fatty acid activation in Mycobacterium tuberculosis.</title>
        <authorList>
            <person name="Arora P."/>
            <person name="Goyal A."/>
            <person name="Natarajan V.T."/>
            <person name="Rajakumara E."/>
            <person name="Verma P."/>
            <person name="Gupta R."/>
            <person name="Yousuf M."/>
            <person name="Trivedi O.A."/>
            <person name="Mohanty D."/>
            <person name="Tyagi A."/>
            <person name="Sankaranarayanan R."/>
            <person name="Gokhale R.S."/>
        </authorList>
    </citation>
    <scope>FUNCTION</scope>
    <scope>CATALYTIC ACTIVITY</scope>
</reference>
<reference key="6">
    <citation type="journal article" date="2009" name="PLoS ONE">
        <title>Dissecting the role of critical residues and substrate preference of a fatty acyl-CoA synthetase (FadD13) of Mycobacterium tuberculosis.</title>
        <authorList>
            <person name="Khare G."/>
            <person name="Gupta V."/>
            <person name="Gupta R.K."/>
            <person name="Gupta R."/>
            <person name="Bhat R."/>
            <person name="Tyagi A.K."/>
        </authorList>
    </citation>
    <scope>FUNCTION</scope>
    <scope>CATALYTIC ACTIVITY</scope>
    <scope>MUTAGENESIS OF LYS-172; VAL-209; ALA-211; ALA-302; TRP-377; ASP-382; SER-404 AND LYS-487</scope>
    <scope>BIOPHYSICOCHEMICAL PROPERTIES</scope>
    <scope>SUBSTRATE SPECIFICITY</scope>
    <scope>SUBUNIT</scope>
</reference>
<reference key="7">
    <citation type="journal article" date="2011" name="J. Mol. Model.">
        <title>Molecular modeling studies of Fatty acyl-CoA synthetase (FadD13) from Mycobacterium tuberculosis--a potential target for the development of antitubercular drugs.</title>
        <authorList>
            <person name="Jatana N."/>
            <person name="Jangid S."/>
            <person name="Khare G."/>
            <person name="Tyagi A.K."/>
            <person name="Latha N."/>
        </authorList>
    </citation>
    <scope>MUTAGENESIS OF ARG-397 AND LYS-487</scope>
</reference>
<reference key="8">
    <citation type="journal article" date="2011" name="Mol. Cell. Proteomics">
        <title>Proteogenomic analysis of Mycobacterium tuberculosis by high resolution mass spectrometry.</title>
        <authorList>
            <person name="Kelkar D.S."/>
            <person name="Kumar D."/>
            <person name="Kumar P."/>
            <person name="Balakrishnan L."/>
            <person name="Muthusamy B."/>
            <person name="Yadav A.K."/>
            <person name="Shrivastava P."/>
            <person name="Marimuthu A."/>
            <person name="Anand S."/>
            <person name="Sundaram H."/>
            <person name="Kingsbury R."/>
            <person name="Harsha H.C."/>
            <person name="Nair B."/>
            <person name="Prasad T.S."/>
            <person name="Chauhan D.S."/>
            <person name="Katoch K."/>
            <person name="Katoch V.M."/>
            <person name="Kumar P."/>
            <person name="Chaerkady R."/>
            <person name="Ramachandran S."/>
            <person name="Dash D."/>
            <person name="Pandey A."/>
        </authorList>
    </citation>
    <scope>IDENTIFICATION BY MASS SPECTROMETRY [LARGE SCALE ANALYSIS]</scope>
    <source>
        <strain>ATCC 25618 / H37Rv</strain>
    </source>
</reference>
<reference key="9">
    <citation type="journal article" date="2012" name="J. Mol. Biol.">
        <title>Molecular basis of the functional divergence of fatty acyl-AMP ligase biosynthetic enzymes of Mycobacterium tuberculosis.</title>
        <authorList>
            <person name="Goyal A."/>
            <person name="Verma P."/>
            <person name="Anandhakrishnan M."/>
            <person name="Gokhale R.S."/>
            <person name="Sankaranarayanan R."/>
        </authorList>
    </citation>
    <scope>X-RAY CRYSTALLOGRAPHY (2.09 ANGSTROMS) OF 1-396</scope>
    <scope>MUTAGENESIS OF THR-214; ALA-302; GLY-406 AND LYS-487</scope>
    <scope>BIOPHYSICOCHEMICAL PROPERTIES</scope>
    <scope>SUBSTRATE SELECTIVITY</scope>
</reference>
<reference key="10">
    <citation type="journal article" date="2012" name="Structure">
        <title>The Mycobacterium tuberculosis very-long-chain fatty acyl-CoA synthetase: structural basis for housing lipid substrates longer than the enzyme.</title>
        <authorList>
            <person name="Andersson C.S."/>
            <person name="Lundgren C.A."/>
            <person name="Magnusdottir A."/>
            <person name="Ge C."/>
            <person name="Wieslander A."/>
            <person name="Martinez Molina D."/>
            <person name="Hogbom M."/>
        </authorList>
    </citation>
    <scope>X-RAY CRYSTALLOGRAPHY (1.80 ANGSTROMS)</scope>
    <scope>FUNCTION</scope>
    <scope>SUBCELLULAR LOCATION</scope>
    <scope>MUTAGENESIS OF ARG-9; ARG-17; ARG-195; ARG-197 AND ARG-244</scope>
    <scope>LIPID ACCOMMODATION</scope>
</reference>
<accession>P9WQ37</accession>
<accession>F2GNX9</accession>
<accession>L0TEI7</accession>
<accession>O53306</accession>
<accession>Q7D654</accession>
<evidence type="ECO:0000269" key="1">
    <source>
    </source>
</evidence>
<evidence type="ECO:0000269" key="2">
    <source>
    </source>
</evidence>
<evidence type="ECO:0000269" key="3">
    <source>
    </source>
</evidence>
<evidence type="ECO:0000269" key="4">
    <source>
    </source>
</evidence>
<evidence type="ECO:0000269" key="5">
    <source>
    </source>
</evidence>
<evidence type="ECO:0000269" key="6">
    <source>
    </source>
</evidence>
<evidence type="ECO:0000269" key="7">
    <source>
    </source>
</evidence>
<evidence type="ECO:0000269" key="8">
    <source>
    </source>
</evidence>
<evidence type="ECO:0000305" key="9"/>
<evidence type="ECO:0000305" key="10">
    <source>
    </source>
</evidence>
<evidence type="ECO:0000305" key="11">
    <source>
    </source>
</evidence>
<evidence type="ECO:0007829" key="12">
    <source>
        <dbReference type="PDB" id="3R44"/>
    </source>
</evidence>
<feature type="chain" id="PRO_0000420960" description="Long-chain-fatty-acid--CoA ligase FadD13">
    <location>
        <begin position="1"/>
        <end position="503"/>
    </location>
</feature>
<feature type="site" description="Membrane interaction" evidence="11">
    <location>
        <position position="9"/>
    </location>
</feature>
<feature type="site" description="Membrane interaction" evidence="11">
    <location>
        <position position="17"/>
    </location>
</feature>
<feature type="site" description="Membrane interaction" evidence="11">
    <location>
        <position position="195"/>
    </location>
</feature>
<feature type="site" description="Membrane interaction" evidence="11">
    <location>
        <position position="197"/>
    </location>
</feature>
<feature type="site" description="Important for substrate selectivity" evidence="10">
    <location>
        <position position="214"/>
    </location>
</feature>
<feature type="site" description="Membrane interaction" evidence="11">
    <location>
        <position position="244"/>
    </location>
</feature>
<feature type="site" description="Important for substrate selectivity" evidence="10">
    <location>
        <position position="302"/>
    </location>
</feature>
<feature type="mutagenesis site" description="Alteration of the strength of the membrane binding; when associated with A-9; A-195; A-197 and A-244." evidence="8">
    <original>R</original>
    <variation>A</variation>
    <location>
        <position position="9"/>
    </location>
</feature>
<feature type="mutagenesis site" description="Alteration of the strength of the membrane binding; when associated with A-9; A-17; A-197 and A-244." evidence="8">
    <original>R</original>
    <variation>A</variation>
    <location>
        <position position="17"/>
    </location>
</feature>
<feature type="mutagenesis site" description="Slight reduction of the fatty acyl-CoA ligase activity. Slight increase of susceptibility to proteolysis." evidence="5">
    <original>K</original>
    <variation>A</variation>
    <location>
        <position position="172"/>
    </location>
</feature>
<feature type="mutagenesis site" description="Alteration of the strength of the membrane binding; when associated with A-9; A-17; A-197 and A-244." evidence="8">
    <original>R</original>
    <variation>A</variation>
    <location>
        <position position="195"/>
    </location>
</feature>
<feature type="mutagenesis site" description="Alteration of the strength of the membrane binding; when associated with A-9; A-17; A-195 and A-244." evidence="8">
    <original>R</original>
    <variation>A</variation>
    <location>
        <position position="197"/>
    </location>
</feature>
<feature type="mutagenesis site" description="Strong reduction of the fatty acyl-CoA ligase activity. No significant change in the total expression level, however the cytoplasmic expression is reduced. Slight increase of susceptibility to proteolysis." evidence="5">
    <original>V</original>
    <variation>D</variation>
    <location>
        <position position="209"/>
    </location>
</feature>
<feature type="mutagenesis site" description="Slight increase of the fatty acyl-CoA ligase activity. Reduced rate of proteolytic degradation." evidence="5">
    <original>A</original>
    <variation>G</variation>
    <location>
        <position position="211"/>
    </location>
</feature>
<feature type="mutagenesis site" description="Shows a marked decrease in the activity with lauric and palmitic acid (C12 and C16 fatty acid) with a simultaneous increase in the activity with caprylic acid (C8 fatty acid)." evidence="7">
    <original>T</original>
    <variation>W</variation>
    <location>
        <position position="214"/>
    </location>
</feature>
<feature type="mutagenesis site" description="Alteration of the strength of the membrane binding; when associated with A-17; A-195; A-195 and A-197." evidence="8">
    <original>R</original>
    <variation>A</variation>
    <location>
        <position position="244"/>
    </location>
</feature>
<feature type="mutagenesis site" description="Slight increase of the fatty acyl-CoA ligase activity. Reduced rate of proteolytic degradation." evidence="5 7">
    <original>A</original>
    <variation>G</variation>
    <location>
        <position position="302"/>
    </location>
</feature>
<feature type="mutagenesis site" description="Does not show activity with small, medium or long acyl chains." evidence="5 7">
    <original>A</original>
    <variation>W</variation>
    <location>
        <position position="302"/>
    </location>
</feature>
<feature type="mutagenesis site" description="Strong reduction of the fatty acyl-CoA ligase activity. Enhanced affinity towards palmitic acid binding. No significant change in the total expression level, however the cytoplasmic expression is low. Slight increase of susceptibility to proteolysis." evidence="5">
    <original>W</original>
    <variation>A</variation>
    <location>
        <position position="377"/>
    </location>
</feature>
<feature type="mutagenesis site" description="Strong reduction of the fatty acyl-CoA ligase activity. No significant change in the total expression level, however the cytoplasmic expression is reduced." evidence="5">
    <original>D</original>
    <variation>A</variation>
    <location>
        <position position="382"/>
    </location>
</feature>
<feature type="mutagenesis site" description="Reduction of binding affinity for fatty acids." evidence="6">
    <original>R</original>
    <variation>A</variation>
    <location>
        <position position="397"/>
    </location>
</feature>
<feature type="mutagenesis site" description="Slight reduction of the fatty acyl-CoA ligase activity. Enhanced affinity towards palmitic acid binding." evidence="5">
    <original>S</original>
    <variation>A</variation>
    <location>
        <position position="404"/>
    </location>
</feature>
<feature type="mutagenesis site" description="No effect on the formation of acyl-adenylate intermediate. However, it shows very poor catalytic efficiency to form acyl-CoA." evidence="7">
    <original>G</original>
    <variation>L</variation>
    <location>
        <position position="406"/>
    </location>
</feature>
<feature type="mutagenesis site" description="Strong reduction of the fatty acyl-CoA ligase activity. Reduction of binding affinity for ATP." evidence="5 6 7">
    <original>K</original>
    <variation>A</variation>
    <location>
        <position position="487"/>
    </location>
</feature>
<feature type="helix" evidence="12">
    <location>
        <begin position="4"/>
        <end position="14"/>
    </location>
</feature>
<feature type="strand" evidence="12">
    <location>
        <begin position="18"/>
        <end position="23"/>
    </location>
</feature>
<feature type="helix" evidence="12">
    <location>
        <begin position="24"/>
        <end position="26"/>
    </location>
</feature>
<feature type="strand" evidence="12">
    <location>
        <begin position="28"/>
        <end position="31"/>
    </location>
</feature>
<feature type="helix" evidence="12">
    <location>
        <begin position="32"/>
        <end position="48"/>
    </location>
</feature>
<feature type="strand" evidence="12">
    <location>
        <begin position="56"/>
        <end position="60"/>
    </location>
</feature>
<feature type="helix" evidence="12">
    <location>
        <begin position="65"/>
        <end position="77"/>
    </location>
</feature>
<feature type="strand" evidence="12">
    <location>
        <begin position="80"/>
        <end position="83"/>
    </location>
</feature>
<feature type="helix" evidence="12">
    <location>
        <begin position="90"/>
        <end position="100"/>
    </location>
</feature>
<feature type="strand" evidence="12">
    <location>
        <begin position="103"/>
        <end position="107"/>
    </location>
</feature>
<feature type="helix" evidence="12">
    <location>
        <begin position="109"/>
        <end position="111"/>
    </location>
</feature>
<feature type="helix" evidence="12">
    <location>
        <begin position="112"/>
        <end position="120"/>
    </location>
</feature>
<feature type="strand" evidence="12">
    <location>
        <begin position="121"/>
        <end position="123"/>
    </location>
</feature>
<feature type="strand" evidence="12">
    <location>
        <begin position="130"/>
        <end position="133"/>
    </location>
</feature>
<feature type="helix" evidence="12">
    <location>
        <begin position="134"/>
        <end position="143"/>
    </location>
</feature>
<feature type="strand" evidence="12">
    <location>
        <begin position="157"/>
        <end position="164"/>
    </location>
</feature>
<feature type="strand" evidence="12">
    <location>
        <begin position="172"/>
        <end position="177"/>
    </location>
</feature>
<feature type="helix" evidence="12">
    <location>
        <begin position="178"/>
        <end position="191"/>
    </location>
</feature>
<feature type="strand" evidence="12">
    <location>
        <begin position="199"/>
        <end position="202"/>
    </location>
</feature>
<feature type="helix" evidence="12">
    <location>
        <begin position="209"/>
        <end position="221"/>
    </location>
</feature>
<feature type="strand" evidence="12">
    <location>
        <begin position="224"/>
        <end position="227"/>
    </location>
</feature>
<feature type="helix" evidence="12">
    <location>
        <begin position="233"/>
        <end position="242"/>
    </location>
</feature>
<feature type="strand" evidence="12">
    <location>
        <begin position="247"/>
        <end position="250"/>
    </location>
</feature>
<feature type="helix" evidence="12">
    <location>
        <begin position="252"/>
        <end position="260"/>
    </location>
</feature>
<feature type="helix" evidence="12">
    <location>
        <begin position="262"/>
        <end position="266"/>
    </location>
</feature>
<feature type="strand" evidence="12">
    <location>
        <begin position="274"/>
        <end position="277"/>
    </location>
</feature>
<feature type="helix" evidence="12">
    <location>
        <begin position="284"/>
        <end position="292"/>
    </location>
</feature>
<feature type="strand" evidence="12">
    <location>
        <begin position="296"/>
        <end position="302"/>
    </location>
</feature>
<feature type="helix" evidence="12">
    <location>
        <begin position="304"/>
        <end position="306"/>
    </location>
</feature>
<feature type="strand" evidence="12">
    <location>
        <begin position="310"/>
        <end position="313"/>
    </location>
</feature>
<feature type="helix" evidence="12">
    <location>
        <begin position="315"/>
        <end position="317"/>
    </location>
</feature>
<feature type="turn" evidence="12">
    <location>
        <begin position="318"/>
        <end position="323"/>
    </location>
</feature>
<feature type="strand" evidence="12">
    <location>
        <begin position="326"/>
        <end position="328"/>
    </location>
</feature>
<feature type="strand" evidence="12">
    <location>
        <begin position="332"/>
        <end position="337"/>
    </location>
</feature>
<feature type="strand" evidence="12">
    <location>
        <begin position="343"/>
        <end position="355"/>
    </location>
</feature>
<feature type="strand" evidence="12">
    <location>
        <begin position="360"/>
        <end position="362"/>
    </location>
</feature>
<feature type="helix" evidence="12">
    <location>
        <begin position="366"/>
        <end position="371"/>
    </location>
</feature>
<feature type="strand" evidence="12">
    <location>
        <begin position="377"/>
        <end position="386"/>
    </location>
</feature>
<feature type="strand" evidence="12">
    <location>
        <begin position="392"/>
        <end position="396"/>
    </location>
</feature>
<feature type="helix" evidence="12">
    <location>
        <begin position="398"/>
        <end position="400"/>
    </location>
</feature>
<feature type="strand" evidence="12">
    <location>
        <begin position="402"/>
        <end position="404"/>
    </location>
</feature>
<feature type="strand" evidence="12">
    <location>
        <begin position="407"/>
        <end position="409"/>
    </location>
</feature>
<feature type="helix" evidence="12">
    <location>
        <begin position="411"/>
        <end position="418"/>
    </location>
</feature>
<feature type="strand" evidence="12">
    <location>
        <begin position="424"/>
        <end position="434"/>
    </location>
</feature>
<feature type="turn" evidence="12">
    <location>
        <begin position="435"/>
        <end position="437"/>
    </location>
</feature>
<feature type="strand" evidence="12">
    <location>
        <begin position="438"/>
        <end position="447"/>
    </location>
</feature>
<feature type="turn" evidence="12">
    <location>
        <begin position="449"/>
        <end position="451"/>
    </location>
</feature>
<feature type="helix" evidence="12">
    <location>
        <begin position="454"/>
        <end position="464"/>
    </location>
</feature>
<feature type="helix" evidence="12">
    <location>
        <begin position="467"/>
        <end position="469"/>
    </location>
</feature>
<feature type="strand" evidence="12">
    <location>
        <begin position="472"/>
        <end position="476"/>
    </location>
</feature>
<feature type="helix" evidence="12">
    <location>
        <begin position="490"/>
        <end position="497"/>
    </location>
</feature>
<feature type="helix" evidence="12">
    <location>
        <begin position="498"/>
        <end position="500"/>
    </location>
</feature>
<name>FAC13_MYCTU</name>
<protein>
    <recommendedName>
        <fullName>Long-chain-fatty-acid--CoA ligase FadD13</fullName>
        <ecNumber evidence="4 5">6.2.1.3</ecNumber>
    </recommendedName>
    <alternativeName>
        <fullName>Fatty acyl-CoA ligase</fullName>
        <shortName>FACL</shortName>
        <shortName>FACL13</shortName>
    </alternativeName>
    <alternativeName>
        <fullName>Fatty acyl-CoA synthetase</fullName>
        <shortName>ACS</shortName>
        <shortName>FACS</shortName>
    </alternativeName>
    <alternativeName>
        <fullName>Very-long-chain fatty-acyl-CoA synthetase</fullName>
        <shortName>ACSVL</shortName>
    </alternativeName>
</protein>
<keyword id="KW-0002">3D-structure</keyword>
<keyword id="KW-0067">ATP-binding</keyword>
<keyword id="KW-1003">Cell membrane</keyword>
<keyword id="KW-0276">Fatty acid metabolism</keyword>
<keyword id="KW-0436">Ligase</keyword>
<keyword id="KW-0443">Lipid metabolism</keyword>
<keyword id="KW-0472">Membrane</keyword>
<keyword id="KW-0547">Nucleotide-binding</keyword>
<keyword id="KW-1185">Reference proteome</keyword>
<organism>
    <name type="scientific">Mycobacterium tuberculosis (strain ATCC 25618 / H37Rv)</name>
    <dbReference type="NCBI Taxonomy" id="83332"/>
    <lineage>
        <taxon>Bacteria</taxon>
        <taxon>Bacillati</taxon>
        <taxon>Actinomycetota</taxon>
        <taxon>Actinomycetes</taxon>
        <taxon>Mycobacteriales</taxon>
        <taxon>Mycobacteriaceae</taxon>
        <taxon>Mycobacterium</taxon>
        <taxon>Mycobacterium tuberculosis complex</taxon>
    </lineage>
</organism>
<comment type="function">
    <text evidence="2 4 5 8">Required for maintaining the appropriate mycolic acid composition and permeability of the envelope on its exposure to acidic pH (PubMed:15937179). Catalyzes the activation of long-chain fatty acids as acyl-coenzyme A (acyl-CoA), which are then transferred to the multifunctional polyketide synthase (PKS) type III for further chain extension (PubMed:19182784, PubMed:20027301, PubMed:22560731). It has preference for the fatty acid with long chain length in the following order: hexacosanoic acid (C26), tetracosanoic acid (C24) and palmitic acid (C16) (PubMed:20027301).</text>
</comment>
<comment type="catalytic activity">
    <reaction evidence="4 5">
        <text>a long-chain fatty acid + ATP + CoA = a long-chain fatty acyl-CoA + AMP + diphosphate</text>
        <dbReference type="Rhea" id="RHEA:15421"/>
        <dbReference type="ChEBI" id="CHEBI:30616"/>
        <dbReference type="ChEBI" id="CHEBI:33019"/>
        <dbReference type="ChEBI" id="CHEBI:57287"/>
        <dbReference type="ChEBI" id="CHEBI:57560"/>
        <dbReference type="ChEBI" id="CHEBI:83139"/>
        <dbReference type="ChEBI" id="CHEBI:456215"/>
        <dbReference type="EC" id="6.2.1.3"/>
    </reaction>
</comment>
<comment type="catalytic activity">
    <reaction evidence="5">
        <text>hexacosanoate + ATP + CoA = hexacosanoyl-CoA + AMP + diphosphate</text>
        <dbReference type="Rhea" id="RHEA:43748"/>
        <dbReference type="ChEBI" id="CHEBI:30616"/>
        <dbReference type="ChEBI" id="CHEBI:31013"/>
        <dbReference type="ChEBI" id="CHEBI:33019"/>
        <dbReference type="ChEBI" id="CHEBI:57287"/>
        <dbReference type="ChEBI" id="CHEBI:64868"/>
        <dbReference type="ChEBI" id="CHEBI:456215"/>
    </reaction>
    <physiologicalReaction direction="left-to-right" evidence="5">
        <dbReference type="Rhea" id="RHEA:43749"/>
    </physiologicalReaction>
</comment>
<comment type="catalytic activity">
    <reaction evidence="5">
        <text>tetracosanoate + ATP + CoA = tetracosanoyl-CoA + AMP + diphosphate</text>
        <dbReference type="Rhea" id="RHEA:33639"/>
        <dbReference type="ChEBI" id="CHEBI:30616"/>
        <dbReference type="ChEBI" id="CHEBI:31014"/>
        <dbReference type="ChEBI" id="CHEBI:33019"/>
        <dbReference type="ChEBI" id="CHEBI:57287"/>
        <dbReference type="ChEBI" id="CHEBI:65052"/>
        <dbReference type="ChEBI" id="CHEBI:456215"/>
    </reaction>
    <physiologicalReaction direction="left-to-right" evidence="5">
        <dbReference type="Rhea" id="RHEA:33640"/>
    </physiologicalReaction>
</comment>
<comment type="catalytic activity">
    <reaction evidence="4 5">
        <text>hexadecanoate + ATP + CoA = hexadecanoyl-CoA + AMP + diphosphate</text>
        <dbReference type="Rhea" id="RHEA:30751"/>
        <dbReference type="ChEBI" id="CHEBI:7896"/>
        <dbReference type="ChEBI" id="CHEBI:30616"/>
        <dbReference type="ChEBI" id="CHEBI:33019"/>
        <dbReference type="ChEBI" id="CHEBI:57287"/>
        <dbReference type="ChEBI" id="CHEBI:57379"/>
        <dbReference type="ChEBI" id="CHEBI:456215"/>
    </reaction>
    <physiologicalReaction direction="left-to-right" evidence="4 5">
        <dbReference type="Rhea" id="RHEA:30752"/>
    </physiologicalReaction>
</comment>
<comment type="catalytic activity">
    <reaction evidence="4">
        <text>dodecanoate + ATP + CoA = dodecanoyl-CoA + AMP + diphosphate</text>
        <dbReference type="Rhea" id="RHEA:33623"/>
        <dbReference type="ChEBI" id="CHEBI:18262"/>
        <dbReference type="ChEBI" id="CHEBI:30616"/>
        <dbReference type="ChEBI" id="CHEBI:33019"/>
        <dbReference type="ChEBI" id="CHEBI:57287"/>
        <dbReference type="ChEBI" id="CHEBI:57375"/>
        <dbReference type="ChEBI" id="CHEBI:456215"/>
    </reaction>
    <physiologicalReaction direction="left-to-right" evidence="4">
        <dbReference type="Rhea" id="RHEA:33624"/>
    </physiologicalReaction>
</comment>
<comment type="biophysicochemical properties">
    <kinetics>
        <KM evidence="5 7">0.13 mM for CoA (at pH 8 and at 37 degrees Celsius)</KM>
        <KM evidence="5 7">0.11 mM for CoASH (at pH 8 and at 30 degrees Celsius)</KM>
        <KM evidence="5 7">19.79 uM for palmitic acid (at pH 8 and at 37 degrees Celsius)</KM>
        <KM evidence="5 7">0.23 mM for ATP (at pH 8 and at 37 degrees Celsius)</KM>
        <KM evidence="5 7">0.25 mM for ATP (at pH 8 and at 30 degrees Celsius)</KM>
        <Vmax evidence="5 7">14.62 pmol/min/ug enzyme (at pH 8 and at 37 degrees Celsius)</Vmax>
        <text>kcat is 0.03 sec(-1) for palmitic acid (at pH 8 and at 37 degrees Celsius).</text>
    </kinetics>
</comment>
<comment type="pathway">
    <text>Lipid metabolism; fatty acid biosynthesis.</text>
</comment>
<comment type="subunit">
    <text evidence="5">Homodimer.</text>
</comment>
<comment type="subcellular location">
    <subcellularLocation>
        <location evidence="8">Cell membrane</location>
        <topology evidence="8">Peripheral membrane protein</topology>
    </subcellularLocation>
    <text evidence="8">Membrane-associated through distinctive regions rich in arginine and aromatic residues.</text>
</comment>
<comment type="induction">
    <text evidence="1">Expression is controlled by VirS. Induced at acidic pH and in macrophages.</text>
</comment>
<comment type="disruption phenotype">
    <text evidence="2 3">Inactivation of the mymA operon causes altered cell wall structure, reduced contents and altered composition of mycolic acids along with the accumulation of saturated C24 and C26 fatty acids, and enhanced susceptibility to antibiotics, detergents and acidic pH. Also impairs ability to survive in macrophages.</text>
</comment>
<comment type="similarity">
    <text evidence="9">Belongs to the ATP-dependent AMP-binding enzyme family.</text>
</comment>
<proteinExistence type="evidence at protein level"/>